<accession>P36237</accession>
<gene>
    <name evidence="1" type="primary">rplK</name>
    <name evidence="1" type="synonym">rpl11</name>
    <name type="ordered locus">sll1743</name>
</gene>
<keyword id="KW-0488">Methylation</keyword>
<keyword id="KW-1185">Reference proteome</keyword>
<keyword id="KW-0687">Ribonucleoprotein</keyword>
<keyword id="KW-0689">Ribosomal protein</keyword>
<keyword id="KW-0694">RNA-binding</keyword>
<keyword id="KW-0699">rRNA-binding</keyword>
<protein>
    <recommendedName>
        <fullName evidence="1">Large ribosomal subunit protein uL11</fullName>
    </recommendedName>
    <alternativeName>
        <fullName evidence="2">50S ribosomal protein L11</fullName>
    </alternativeName>
</protein>
<proteinExistence type="inferred from homology"/>
<dbReference type="EMBL" id="X73005">
    <property type="protein sequence ID" value="CAA51491.1"/>
    <property type="molecule type" value="Genomic_DNA"/>
</dbReference>
<dbReference type="EMBL" id="BA000022">
    <property type="protein sequence ID" value="BAA17419.1"/>
    <property type="molecule type" value="Genomic_DNA"/>
</dbReference>
<dbReference type="SMR" id="P36237"/>
<dbReference type="FunCoup" id="P36237">
    <property type="interactions" value="502"/>
</dbReference>
<dbReference type="IntAct" id="P36237">
    <property type="interactions" value="3"/>
</dbReference>
<dbReference type="STRING" id="1148.gene:10498282"/>
<dbReference type="PaxDb" id="1148-1652498"/>
<dbReference type="EnsemblBacteria" id="BAA17419">
    <property type="protein sequence ID" value="BAA17419"/>
    <property type="gene ID" value="BAA17419"/>
</dbReference>
<dbReference type="KEGG" id="syn:sll1743"/>
<dbReference type="eggNOG" id="COG0080">
    <property type="taxonomic scope" value="Bacteria"/>
</dbReference>
<dbReference type="InParanoid" id="P36237"/>
<dbReference type="PhylomeDB" id="P36237"/>
<dbReference type="Proteomes" id="UP000001425">
    <property type="component" value="Chromosome"/>
</dbReference>
<dbReference type="GO" id="GO:0022625">
    <property type="term" value="C:cytosolic large ribosomal subunit"/>
    <property type="evidence" value="ECO:0000318"/>
    <property type="project" value="GO_Central"/>
</dbReference>
<dbReference type="GO" id="GO:0070180">
    <property type="term" value="F:large ribosomal subunit rRNA binding"/>
    <property type="evidence" value="ECO:0000318"/>
    <property type="project" value="GO_Central"/>
</dbReference>
<dbReference type="GO" id="GO:0003735">
    <property type="term" value="F:structural constituent of ribosome"/>
    <property type="evidence" value="ECO:0000318"/>
    <property type="project" value="GO_Central"/>
</dbReference>
<dbReference type="GO" id="GO:0006412">
    <property type="term" value="P:translation"/>
    <property type="evidence" value="ECO:0000318"/>
    <property type="project" value="GO_Central"/>
</dbReference>
<dbReference type="CDD" id="cd00349">
    <property type="entry name" value="Ribosomal_L11"/>
    <property type="match status" value="1"/>
</dbReference>
<dbReference type="FunFam" id="1.10.10.250:FF:000001">
    <property type="entry name" value="50S ribosomal protein L11"/>
    <property type="match status" value="1"/>
</dbReference>
<dbReference type="FunFam" id="3.30.1550.10:FF:000001">
    <property type="entry name" value="50S ribosomal protein L11"/>
    <property type="match status" value="1"/>
</dbReference>
<dbReference type="Gene3D" id="1.10.10.250">
    <property type="entry name" value="Ribosomal protein L11, C-terminal domain"/>
    <property type="match status" value="1"/>
</dbReference>
<dbReference type="Gene3D" id="3.30.1550.10">
    <property type="entry name" value="Ribosomal protein L11/L12, N-terminal domain"/>
    <property type="match status" value="1"/>
</dbReference>
<dbReference type="HAMAP" id="MF_00736">
    <property type="entry name" value="Ribosomal_uL11"/>
    <property type="match status" value="1"/>
</dbReference>
<dbReference type="InterPro" id="IPR000911">
    <property type="entry name" value="Ribosomal_uL11"/>
</dbReference>
<dbReference type="InterPro" id="IPR006519">
    <property type="entry name" value="Ribosomal_uL11_bac-typ"/>
</dbReference>
<dbReference type="InterPro" id="IPR020783">
    <property type="entry name" value="Ribosomal_uL11_C"/>
</dbReference>
<dbReference type="InterPro" id="IPR036769">
    <property type="entry name" value="Ribosomal_uL11_C_sf"/>
</dbReference>
<dbReference type="InterPro" id="IPR020785">
    <property type="entry name" value="Ribosomal_uL11_CS"/>
</dbReference>
<dbReference type="InterPro" id="IPR020784">
    <property type="entry name" value="Ribosomal_uL11_N"/>
</dbReference>
<dbReference type="InterPro" id="IPR036796">
    <property type="entry name" value="Ribosomal_uL11_N_sf"/>
</dbReference>
<dbReference type="NCBIfam" id="TIGR01632">
    <property type="entry name" value="L11_bact"/>
    <property type="match status" value="1"/>
</dbReference>
<dbReference type="PANTHER" id="PTHR11661">
    <property type="entry name" value="60S RIBOSOMAL PROTEIN L12"/>
    <property type="match status" value="1"/>
</dbReference>
<dbReference type="PANTHER" id="PTHR11661:SF1">
    <property type="entry name" value="LARGE RIBOSOMAL SUBUNIT PROTEIN UL11M"/>
    <property type="match status" value="1"/>
</dbReference>
<dbReference type="Pfam" id="PF00298">
    <property type="entry name" value="Ribosomal_L11"/>
    <property type="match status" value="1"/>
</dbReference>
<dbReference type="Pfam" id="PF03946">
    <property type="entry name" value="Ribosomal_L11_N"/>
    <property type="match status" value="1"/>
</dbReference>
<dbReference type="SMART" id="SM00649">
    <property type="entry name" value="RL11"/>
    <property type="match status" value="1"/>
</dbReference>
<dbReference type="SUPFAM" id="SSF54747">
    <property type="entry name" value="Ribosomal L11/L12e N-terminal domain"/>
    <property type="match status" value="1"/>
</dbReference>
<dbReference type="SUPFAM" id="SSF46906">
    <property type="entry name" value="Ribosomal protein L11, C-terminal domain"/>
    <property type="match status" value="1"/>
</dbReference>
<dbReference type="PROSITE" id="PS00359">
    <property type="entry name" value="RIBOSOMAL_L11"/>
    <property type="match status" value="1"/>
</dbReference>
<evidence type="ECO:0000255" key="1">
    <source>
        <dbReference type="HAMAP-Rule" id="MF_00736"/>
    </source>
</evidence>
<evidence type="ECO:0000305" key="2"/>
<organism>
    <name type="scientific">Synechocystis sp. (strain ATCC 27184 / PCC 6803 / Kazusa)</name>
    <dbReference type="NCBI Taxonomy" id="1111708"/>
    <lineage>
        <taxon>Bacteria</taxon>
        <taxon>Bacillati</taxon>
        <taxon>Cyanobacteriota</taxon>
        <taxon>Cyanophyceae</taxon>
        <taxon>Synechococcales</taxon>
        <taxon>Merismopediaceae</taxon>
        <taxon>Synechocystis</taxon>
    </lineage>
</organism>
<sequence length="141" mass="14978">MAKKVVALIKLALPAGKANPAPPVGPALGQHGVNIMAFCKEYNAKTADKPGMIIPVEISVFEDRSFTFILKTPPASVLIRKAAGVEKGSSEPNKNKVASITREQLREIAQTKLPDLNANDIDAAMNIIEGTARNMGITVNS</sequence>
<name>RL11_SYNY3</name>
<reference key="1">
    <citation type="journal article" date="1993" name="J. Biol. Chem.">
        <title>A novel operon organization involving the genes for chorismate synthase (aromatic biosynthesis pathway) and ribosomal GTPase center proteins (L11, L1, L10, L12: rplKAJL) in cyanobacterium Synechocystis PCC 6803.</title>
        <authorList>
            <person name="Schmidt J."/>
            <person name="Bubunenko M."/>
            <person name="Subramanian A.R."/>
        </authorList>
    </citation>
    <scope>NUCLEOTIDE SEQUENCE [GENOMIC DNA]</scope>
</reference>
<reference key="2">
    <citation type="journal article" date="1996" name="DNA Res.">
        <title>Sequence analysis of the genome of the unicellular cyanobacterium Synechocystis sp. strain PCC6803. II. Sequence determination of the entire genome and assignment of potential protein-coding regions.</title>
        <authorList>
            <person name="Kaneko T."/>
            <person name="Sato S."/>
            <person name="Kotani H."/>
            <person name="Tanaka A."/>
            <person name="Asamizu E."/>
            <person name="Nakamura Y."/>
            <person name="Miyajima N."/>
            <person name="Hirosawa M."/>
            <person name="Sugiura M."/>
            <person name="Sasamoto S."/>
            <person name="Kimura T."/>
            <person name="Hosouchi T."/>
            <person name="Matsuno A."/>
            <person name="Muraki A."/>
            <person name="Nakazaki N."/>
            <person name="Naruo K."/>
            <person name="Okumura S."/>
            <person name="Shimpo S."/>
            <person name="Takeuchi C."/>
            <person name="Wada T."/>
            <person name="Watanabe A."/>
            <person name="Yamada M."/>
            <person name="Yasuda M."/>
            <person name="Tabata S."/>
        </authorList>
    </citation>
    <scope>NUCLEOTIDE SEQUENCE [LARGE SCALE GENOMIC DNA]</scope>
    <source>
        <strain>ATCC 27184 / PCC 6803 / Kazusa</strain>
    </source>
</reference>
<feature type="chain" id="PRO_0000104396" description="Large ribosomal subunit protein uL11">
    <location>
        <begin position="1"/>
        <end position="141"/>
    </location>
</feature>
<comment type="function">
    <text evidence="1">Forms part of the ribosomal stalk which helps the ribosome interact with GTP-bound translation factors.</text>
</comment>
<comment type="subunit">
    <text evidence="1">Part of the ribosomal stalk of the 50S ribosomal subunit. Interacts with L10 and the large rRNA to form the base of the stalk. L10 forms an elongated spine to which L12 dimers bind in a sequential fashion forming a multimeric L10(L12)X complex.</text>
</comment>
<comment type="PTM">
    <text evidence="1">One or more lysine residues are methylated.</text>
</comment>
<comment type="similarity">
    <text evidence="1">Belongs to the universal ribosomal protein uL11 family.</text>
</comment>